<feature type="chain" id="PRO_0000255378" description="Glycerol-3-phosphate dehydrogenase [NAD(P)+]">
    <location>
        <begin position="1"/>
        <end position="332"/>
    </location>
</feature>
<feature type="active site" description="Proton acceptor" evidence="1">
    <location>
        <position position="192"/>
    </location>
</feature>
<feature type="binding site" evidence="1">
    <location>
        <position position="11"/>
    </location>
    <ligand>
        <name>NADPH</name>
        <dbReference type="ChEBI" id="CHEBI:57783"/>
    </ligand>
</feature>
<feature type="binding site" evidence="1">
    <location>
        <position position="12"/>
    </location>
    <ligand>
        <name>NADPH</name>
        <dbReference type="ChEBI" id="CHEBI:57783"/>
    </ligand>
</feature>
<feature type="binding site" evidence="1">
    <location>
        <position position="32"/>
    </location>
    <ligand>
        <name>NADPH</name>
        <dbReference type="ChEBI" id="CHEBI:57783"/>
    </ligand>
</feature>
<feature type="binding site" evidence="1">
    <location>
        <position position="106"/>
    </location>
    <ligand>
        <name>NADPH</name>
        <dbReference type="ChEBI" id="CHEBI:57783"/>
    </ligand>
</feature>
<feature type="binding site" evidence="1">
    <location>
        <position position="106"/>
    </location>
    <ligand>
        <name>sn-glycerol 3-phosphate</name>
        <dbReference type="ChEBI" id="CHEBI:57597"/>
    </ligand>
</feature>
<feature type="binding site" evidence="1">
    <location>
        <position position="137"/>
    </location>
    <ligand>
        <name>sn-glycerol 3-phosphate</name>
        <dbReference type="ChEBI" id="CHEBI:57597"/>
    </ligand>
</feature>
<feature type="binding site" evidence="1">
    <location>
        <position position="139"/>
    </location>
    <ligand>
        <name>sn-glycerol 3-phosphate</name>
        <dbReference type="ChEBI" id="CHEBI:57597"/>
    </ligand>
</feature>
<feature type="binding site" evidence="1">
    <location>
        <position position="141"/>
    </location>
    <ligand>
        <name>NADPH</name>
        <dbReference type="ChEBI" id="CHEBI:57783"/>
    </ligand>
</feature>
<feature type="binding site" evidence="1">
    <location>
        <position position="192"/>
    </location>
    <ligand>
        <name>sn-glycerol 3-phosphate</name>
        <dbReference type="ChEBI" id="CHEBI:57597"/>
    </ligand>
</feature>
<feature type="binding site" evidence="1">
    <location>
        <position position="245"/>
    </location>
    <ligand>
        <name>sn-glycerol 3-phosphate</name>
        <dbReference type="ChEBI" id="CHEBI:57597"/>
    </ligand>
</feature>
<feature type="binding site" evidence="1">
    <location>
        <position position="255"/>
    </location>
    <ligand>
        <name>sn-glycerol 3-phosphate</name>
        <dbReference type="ChEBI" id="CHEBI:57597"/>
    </ligand>
</feature>
<feature type="binding site" evidence="1">
    <location>
        <position position="256"/>
    </location>
    <ligand>
        <name>NADPH</name>
        <dbReference type="ChEBI" id="CHEBI:57783"/>
    </ligand>
</feature>
<feature type="binding site" evidence="1">
    <location>
        <position position="256"/>
    </location>
    <ligand>
        <name>sn-glycerol 3-phosphate</name>
        <dbReference type="ChEBI" id="CHEBI:57597"/>
    </ligand>
</feature>
<feature type="binding site" evidence="1">
    <location>
        <position position="257"/>
    </location>
    <ligand>
        <name>sn-glycerol 3-phosphate</name>
        <dbReference type="ChEBI" id="CHEBI:57597"/>
    </ligand>
</feature>
<feature type="binding site" evidence="1">
    <location>
        <position position="280"/>
    </location>
    <ligand>
        <name>NADPH</name>
        <dbReference type="ChEBI" id="CHEBI:57783"/>
    </ligand>
</feature>
<feature type="binding site" evidence="1">
    <location>
        <position position="282"/>
    </location>
    <ligand>
        <name>NADPH</name>
        <dbReference type="ChEBI" id="CHEBI:57783"/>
    </ligand>
</feature>
<accession>Q2FGW8</accession>
<evidence type="ECO:0000255" key="1">
    <source>
        <dbReference type="HAMAP-Rule" id="MF_00394"/>
    </source>
</evidence>
<gene>
    <name evidence="1" type="primary">gpsA</name>
    <name type="ordered locus">SAUSA300_1363</name>
</gene>
<keyword id="KW-0963">Cytoplasm</keyword>
<keyword id="KW-0444">Lipid biosynthesis</keyword>
<keyword id="KW-0443">Lipid metabolism</keyword>
<keyword id="KW-0520">NAD</keyword>
<keyword id="KW-0521">NADP</keyword>
<keyword id="KW-0547">Nucleotide-binding</keyword>
<keyword id="KW-0560">Oxidoreductase</keyword>
<keyword id="KW-0594">Phospholipid biosynthesis</keyword>
<keyword id="KW-1208">Phospholipid metabolism</keyword>
<dbReference type="EC" id="1.1.1.94" evidence="1"/>
<dbReference type="EMBL" id="CP000255">
    <property type="protein sequence ID" value="ABD20428.1"/>
    <property type="molecule type" value="Genomic_DNA"/>
</dbReference>
<dbReference type="RefSeq" id="WP_000161738.1">
    <property type="nucleotide sequence ID" value="NZ_CP027476.1"/>
</dbReference>
<dbReference type="SMR" id="Q2FGW8"/>
<dbReference type="KEGG" id="saa:SAUSA300_1363"/>
<dbReference type="HOGENOM" id="CLU_033449_0_2_9"/>
<dbReference type="OMA" id="NRMFGNM"/>
<dbReference type="UniPathway" id="UPA00940"/>
<dbReference type="Proteomes" id="UP000001939">
    <property type="component" value="Chromosome"/>
</dbReference>
<dbReference type="GO" id="GO:0005829">
    <property type="term" value="C:cytosol"/>
    <property type="evidence" value="ECO:0007669"/>
    <property type="project" value="TreeGrafter"/>
</dbReference>
<dbReference type="GO" id="GO:0047952">
    <property type="term" value="F:glycerol-3-phosphate dehydrogenase [NAD(P)+] activity"/>
    <property type="evidence" value="ECO:0007669"/>
    <property type="project" value="UniProtKB-UniRule"/>
</dbReference>
<dbReference type="GO" id="GO:0051287">
    <property type="term" value="F:NAD binding"/>
    <property type="evidence" value="ECO:0007669"/>
    <property type="project" value="InterPro"/>
</dbReference>
<dbReference type="GO" id="GO:0005975">
    <property type="term" value="P:carbohydrate metabolic process"/>
    <property type="evidence" value="ECO:0007669"/>
    <property type="project" value="InterPro"/>
</dbReference>
<dbReference type="GO" id="GO:0046167">
    <property type="term" value="P:glycerol-3-phosphate biosynthetic process"/>
    <property type="evidence" value="ECO:0007669"/>
    <property type="project" value="UniProtKB-UniRule"/>
</dbReference>
<dbReference type="GO" id="GO:0046168">
    <property type="term" value="P:glycerol-3-phosphate catabolic process"/>
    <property type="evidence" value="ECO:0007669"/>
    <property type="project" value="InterPro"/>
</dbReference>
<dbReference type="GO" id="GO:0006650">
    <property type="term" value="P:glycerophospholipid metabolic process"/>
    <property type="evidence" value="ECO:0007669"/>
    <property type="project" value="UniProtKB-UniRule"/>
</dbReference>
<dbReference type="GO" id="GO:0008654">
    <property type="term" value="P:phospholipid biosynthetic process"/>
    <property type="evidence" value="ECO:0007669"/>
    <property type="project" value="UniProtKB-KW"/>
</dbReference>
<dbReference type="FunFam" id="1.10.1040.10:FF:000001">
    <property type="entry name" value="Glycerol-3-phosphate dehydrogenase [NAD(P)+]"/>
    <property type="match status" value="1"/>
</dbReference>
<dbReference type="FunFam" id="3.40.50.720:FF:000019">
    <property type="entry name" value="Glycerol-3-phosphate dehydrogenase [NAD(P)+]"/>
    <property type="match status" value="1"/>
</dbReference>
<dbReference type="Gene3D" id="1.10.1040.10">
    <property type="entry name" value="N-(1-d-carboxylethyl)-l-norvaline Dehydrogenase, domain 2"/>
    <property type="match status" value="1"/>
</dbReference>
<dbReference type="Gene3D" id="3.40.50.720">
    <property type="entry name" value="NAD(P)-binding Rossmann-like Domain"/>
    <property type="match status" value="1"/>
</dbReference>
<dbReference type="HAMAP" id="MF_00394">
    <property type="entry name" value="NAD_Glyc3P_dehydrog"/>
    <property type="match status" value="1"/>
</dbReference>
<dbReference type="InterPro" id="IPR008927">
    <property type="entry name" value="6-PGluconate_DH-like_C_sf"/>
</dbReference>
<dbReference type="InterPro" id="IPR013328">
    <property type="entry name" value="6PGD_dom2"/>
</dbReference>
<dbReference type="InterPro" id="IPR006168">
    <property type="entry name" value="G3P_DH_NAD-dep"/>
</dbReference>
<dbReference type="InterPro" id="IPR006109">
    <property type="entry name" value="G3P_DH_NAD-dep_C"/>
</dbReference>
<dbReference type="InterPro" id="IPR011128">
    <property type="entry name" value="G3P_DH_NAD-dep_N"/>
</dbReference>
<dbReference type="InterPro" id="IPR036291">
    <property type="entry name" value="NAD(P)-bd_dom_sf"/>
</dbReference>
<dbReference type="NCBIfam" id="NF000940">
    <property type="entry name" value="PRK00094.1-2"/>
    <property type="match status" value="1"/>
</dbReference>
<dbReference type="NCBIfam" id="NF000941">
    <property type="entry name" value="PRK00094.1-3"/>
    <property type="match status" value="1"/>
</dbReference>
<dbReference type="NCBIfam" id="NF000942">
    <property type="entry name" value="PRK00094.1-4"/>
    <property type="match status" value="1"/>
</dbReference>
<dbReference type="PANTHER" id="PTHR11728">
    <property type="entry name" value="GLYCEROL-3-PHOSPHATE DEHYDROGENASE"/>
    <property type="match status" value="1"/>
</dbReference>
<dbReference type="PANTHER" id="PTHR11728:SF1">
    <property type="entry name" value="GLYCEROL-3-PHOSPHATE DEHYDROGENASE [NAD(+)] 2, CHLOROPLASTIC"/>
    <property type="match status" value="1"/>
</dbReference>
<dbReference type="Pfam" id="PF07479">
    <property type="entry name" value="NAD_Gly3P_dh_C"/>
    <property type="match status" value="1"/>
</dbReference>
<dbReference type="Pfam" id="PF01210">
    <property type="entry name" value="NAD_Gly3P_dh_N"/>
    <property type="match status" value="1"/>
</dbReference>
<dbReference type="PIRSF" id="PIRSF000114">
    <property type="entry name" value="Glycerol-3-P_dh"/>
    <property type="match status" value="1"/>
</dbReference>
<dbReference type="PRINTS" id="PR00077">
    <property type="entry name" value="GPDHDRGNASE"/>
</dbReference>
<dbReference type="SUPFAM" id="SSF48179">
    <property type="entry name" value="6-phosphogluconate dehydrogenase C-terminal domain-like"/>
    <property type="match status" value="1"/>
</dbReference>
<dbReference type="SUPFAM" id="SSF51735">
    <property type="entry name" value="NAD(P)-binding Rossmann-fold domains"/>
    <property type="match status" value="1"/>
</dbReference>
<dbReference type="PROSITE" id="PS00957">
    <property type="entry name" value="NAD_G3PDH"/>
    <property type="match status" value="1"/>
</dbReference>
<reference key="1">
    <citation type="journal article" date="2006" name="Lancet">
        <title>Complete genome sequence of USA300, an epidemic clone of community-acquired meticillin-resistant Staphylococcus aureus.</title>
        <authorList>
            <person name="Diep B.A."/>
            <person name="Gill S.R."/>
            <person name="Chang R.F."/>
            <person name="Phan T.H."/>
            <person name="Chen J.H."/>
            <person name="Davidson M.G."/>
            <person name="Lin F."/>
            <person name="Lin J."/>
            <person name="Carleton H.A."/>
            <person name="Mongodin E.F."/>
            <person name="Sensabaugh G.F."/>
            <person name="Perdreau-Remington F."/>
        </authorList>
    </citation>
    <scope>NUCLEOTIDE SEQUENCE [LARGE SCALE GENOMIC DNA]</scope>
    <source>
        <strain>USA300</strain>
    </source>
</reference>
<comment type="function">
    <text evidence="1">Catalyzes the reduction of the glycolytic intermediate dihydroxyacetone phosphate (DHAP) to sn-glycerol 3-phosphate (G3P), the key precursor for phospholipid synthesis.</text>
</comment>
<comment type="catalytic activity">
    <reaction evidence="1">
        <text>sn-glycerol 3-phosphate + NAD(+) = dihydroxyacetone phosphate + NADH + H(+)</text>
        <dbReference type="Rhea" id="RHEA:11092"/>
        <dbReference type="ChEBI" id="CHEBI:15378"/>
        <dbReference type="ChEBI" id="CHEBI:57540"/>
        <dbReference type="ChEBI" id="CHEBI:57597"/>
        <dbReference type="ChEBI" id="CHEBI:57642"/>
        <dbReference type="ChEBI" id="CHEBI:57945"/>
        <dbReference type="EC" id="1.1.1.94"/>
    </reaction>
    <physiologicalReaction direction="right-to-left" evidence="1">
        <dbReference type="Rhea" id="RHEA:11094"/>
    </physiologicalReaction>
</comment>
<comment type="catalytic activity">
    <reaction evidence="1">
        <text>sn-glycerol 3-phosphate + NADP(+) = dihydroxyacetone phosphate + NADPH + H(+)</text>
        <dbReference type="Rhea" id="RHEA:11096"/>
        <dbReference type="ChEBI" id="CHEBI:15378"/>
        <dbReference type="ChEBI" id="CHEBI:57597"/>
        <dbReference type="ChEBI" id="CHEBI:57642"/>
        <dbReference type="ChEBI" id="CHEBI:57783"/>
        <dbReference type="ChEBI" id="CHEBI:58349"/>
        <dbReference type="EC" id="1.1.1.94"/>
    </reaction>
    <physiologicalReaction direction="right-to-left" evidence="1">
        <dbReference type="Rhea" id="RHEA:11098"/>
    </physiologicalReaction>
</comment>
<comment type="pathway">
    <text evidence="1">Membrane lipid metabolism; glycerophospholipid metabolism.</text>
</comment>
<comment type="subcellular location">
    <subcellularLocation>
        <location evidence="1">Cytoplasm</location>
    </subcellularLocation>
</comment>
<comment type="similarity">
    <text evidence="1">Belongs to the NAD-dependent glycerol-3-phosphate dehydrogenase family.</text>
</comment>
<organism>
    <name type="scientific">Staphylococcus aureus (strain USA300)</name>
    <dbReference type="NCBI Taxonomy" id="367830"/>
    <lineage>
        <taxon>Bacteria</taxon>
        <taxon>Bacillati</taxon>
        <taxon>Bacillota</taxon>
        <taxon>Bacilli</taxon>
        <taxon>Bacillales</taxon>
        <taxon>Staphylococcaceae</taxon>
        <taxon>Staphylococcus</taxon>
    </lineage>
</organism>
<name>GPDA_STAA3</name>
<sequence>MTKITVFGMGSFGTALANVLAENGHDVLMWGKNQDAVDELNTCHTNKKYLKYAKLDVNIIATSDMTKAIQFADIYLMALPTKAMREVASQINDKLTSKKTFIHVAKGIENGTFKRVSEMIEDSISPEYNAGIGVLSGPSHAEEVVVKQPTTVAASSKDKSVSKLTQDLFMNDYLRVYTNDDLIGVELGGALKNIIAVASGIVAGIGYGDNAKAALMTRGLAEISRLGEKLGADPMTFLGLGGIGDLIVTCTSTHSRNFTLGYKLGQGESMDQALSEMNMVVEGIYTTKSVYHLAKEKNVDMPITNALYRVLFENISVKECVKDLMERDKKSE</sequence>
<protein>
    <recommendedName>
        <fullName evidence="1">Glycerol-3-phosphate dehydrogenase [NAD(P)+]</fullName>
        <ecNumber evidence="1">1.1.1.94</ecNumber>
    </recommendedName>
    <alternativeName>
        <fullName evidence="1">NAD(P)(+)-dependent glycerol-3-phosphate dehydrogenase</fullName>
    </alternativeName>
    <alternativeName>
        <fullName evidence="1">NAD(P)H-dependent dihydroxyacetone-phosphate reductase</fullName>
    </alternativeName>
</protein>
<proteinExistence type="inferred from homology"/>